<gene>
    <name evidence="2" type="primary">tuf</name>
    <name type="synonym">tufA</name>
    <name type="ordered locus">all4337</name>
</gene>
<sequence>MARAKFERTKPHVNIGTIGHVDHGKTTLTAAITMTLAALGQAVAKGYDQIDNAPEEKARGITINTAHVEYETANRHYAHVDCPGHADYVKNMITGAAQMDGAILVVAATDGPMPQTREHILLAKQVGVPKLVVFLNKEDMMEDAELLELVELELRELLTEYEFDGDDIPIVRGSGLQALEVMTKNPKTQRGENPWVDKIYELMDAVDSYIPDPERDIDKPFLMAVEDVFSITGRGTVATGRIERGKVKVGDVVELVGIRDTRNTTVTGIEMFKKSLDEGMAGDNAGVLLRGIQKADIERGMVLAKPGSITPHTQFEGEVYVLTEKEGGRKTPFFAGYRPQFYVRTTDVTGTIKAFTSDEGETVEMVMPGDRIKVTVELINPIAIEQGMRFAIREGGRTIGAGVVSKIVK</sequence>
<accession>Q8YP63</accession>
<proteinExistence type="evidence at protein level"/>
<feature type="chain" id="PRO_0000091282" description="Elongation factor Tu">
    <location>
        <begin position="1"/>
        <end position="409"/>
    </location>
</feature>
<feature type="domain" description="tr-type G">
    <location>
        <begin position="10"/>
        <end position="214"/>
    </location>
</feature>
<feature type="region of interest" description="G1" evidence="1">
    <location>
        <begin position="19"/>
        <end position="26"/>
    </location>
</feature>
<feature type="region of interest" description="G2" evidence="1">
    <location>
        <begin position="60"/>
        <end position="64"/>
    </location>
</feature>
<feature type="region of interest" description="G3" evidence="1">
    <location>
        <begin position="81"/>
        <end position="84"/>
    </location>
</feature>
<feature type="region of interest" description="G4" evidence="1">
    <location>
        <begin position="136"/>
        <end position="139"/>
    </location>
</feature>
<feature type="region of interest" description="G5" evidence="1">
    <location>
        <begin position="174"/>
        <end position="176"/>
    </location>
</feature>
<feature type="binding site" evidence="2">
    <location>
        <begin position="19"/>
        <end position="26"/>
    </location>
    <ligand>
        <name>GTP</name>
        <dbReference type="ChEBI" id="CHEBI:37565"/>
    </ligand>
</feature>
<feature type="binding site" evidence="2">
    <location>
        <position position="26"/>
    </location>
    <ligand>
        <name>Mg(2+)</name>
        <dbReference type="ChEBI" id="CHEBI:18420"/>
    </ligand>
</feature>
<feature type="binding site" evidence="2">
    <location>
        <begin position="81"/>
        <end position="85"/>
    </location>
    <ligand>
        <name>GTP</name>
        <dbReference type="ChEBI" id="CHEBI:37565"/>
    </ligand>
</feature>
<feature type="binding site" evidence="2">
    <location>
        <begin position="136"/>
        <end position="139"/>
    </location>
    <ligand>
        <name>GTP</name>
        <dbReference type="ChEBI" id="CHEBI:37565"/>
    </ligand>
</feature>
<dbReference type="EC" id="3.6.5.3" evidence="2"/>
<dbReference type="EMBL" id="BA000019">
    <property type="protein sequence ID" value="BAB76036.1"/>
    <property type="molecule type" value="Genomic_DNA"/>
</dbReference>
<dbReference type="PIR" id="AB2348">
    <property type="entry name" value="AB2348"/>
</dbReference>
<dbReference type="RefSeq" id="WP_010998475.1">
    <property type="nucleotide sequence ID" value="NZ_RSCN01000027.1"/>
</dbReference>
<dbReference type="SMR" id="Q8YP63"/>
<dbReference type="STRING" id="103690.gene:10496386"/>
<dbReference type="KEGG" id="ana:all4337"/>
<dbReference type="eggNOG" id="COG0050">
    <property type="taxonomic scope" value="Bacteria"/>
</dbReference>
<dbReference type="OrthoDB" id="9804504at2"/>
<dbReference type="Proteomes" id="UP000002483">
    <property type="component" value="Chromosome"/>
</dbReference>
<dbReference type="GO" id="GO:0005829">
    <property type="term" value="C:cytosol"/>
    <property type="evidence" value="ECO:0007669"/>
    <property type="project" value="TreeGrafter"/>
</dbReference>
<dbReference type="GO" id="GO:0005525">
    <property type="term" value="F:GTP binding"/>
    <property type="evidence" value="ECO:0007669"/>
    <property type="project" value="UniProtKB-UniRule"/>
</dbReference>
<dbReference type="GO" id="GO:0003924">
    <property type="term" value="F:GTPase activity"/>
    <property type="evidence" value="ECO:0007669"/>
    <property type="project" value="InterPro"/>
</dbReference>
<dbReference type="GO" id="GO:0003746">
    <property type="term" value="F:translation elongation factor activity"/>
    <property type="evidence" value="ECO:0007669"/>
    <property type="project" value="UniProtKB-UniRule"/>
</dbReference>
<dbReference type="CDD" id="cd01884">
    <property type="entry name" value="EF_Tu"/>
    <property type="match status" value="1"/>
</dbReference>
<dbReference type="CDD" id="cd03697">
    <property type="entry name" value="EFTU_II"/>
    <property type="match status" value="1"/>
</dbReference>
<dbReference type="CDD" id="cd03707">
    <property type="entry name" value="EFTU_III"/>
    <property type="match status" value="1"/>
</dbReference>
<dbReference type="FunFam" id="2.40.30.10:FF:000001">
    <property type="entry name" value="Elongation factor Tu"/>
    <property type="match status" value="1"/>
</dbReference>
<dbReference type="FunFam" id="2.40.30.10:FF:000046">
    <property type="entry name" value="Elongation factor Tu"/>
    <property type="match status" value="1"/>
</dbReference>
<dbReference type="FunFam" id="3.40.50.300:FF:000003">
    <property type="entry name" value="Elongation factor Tu"/>
    <property type="match status" value="1"/>
</dbReference>
<dbReference type="Gene3D" id="3.40.50.300">
    <property type="entry name" value="P-loop containing nucleotide triphosphate hydrolases"/>
    <property type="match status" value="1"/>
</dbReference>
<dbReference type="Gene3D" id="2.40.30.10">
    <property type="entry name" value="Translation factors"/>
    <property type="match status" value="2"/>
</dbReference>
<dbReference type="HAMAP" id="MF_00118_B">
    <property type="entry name" value="EF_Tu_B"/>
    <property type="match status" value="1"/>
</dbReference>
<dbReference type="InterPro" id="IPR041709">
    <property type="entry name" value="EF-Tu_GTP-bd"/>
</dbReference>
<dbReference type="InterPro" id="IPR050055">
    <property type="entry name" value="EF-Tu_GTPase"/>
</dbReference>
<dbReference type="InterPro" id="IPR004161">
    <property type="entry name" value="EFTu-like_2"/>
</dbReference>
<dbReference type="InterPro" id="IPR033720">
    <property type="entry name" value="EFTU_2"/>
</dbReference>
<dbReference type="InterPro" id="IPR031157">
    <property type="entry name" value="G_TR_CS"/>
</dbReference>
<dbReference type="InterPro" id="IPR027417">
    <property type="entry name" value="P-loop_NTPase"/>
</dbReference>
<dbReference type="InterPro" id="IPR005225">
    <property type="entry name" value="Small_GTP-bd"/>
</dbReference>
<dbReference type="InterPro" id="IPR000795">
    <property type="entry name" value="T_Tr_GTP-bd_dom"/>
</dbReference>
<dbReference type="InterPro" id="IPR009000">
    <property type="entry name" value="Transl_B-barrel_sf"/>
</dbReference>
<dbReference type="InterPro" id="IPR009001">
    <property type="entry name" value="Transl_elong_EF1A/Init_IF2_C"/>
</dbReference>
<dbReference type="InterPro" id="IPR004541">
    <property type="entry name" value="Transl_elong_EFTu/EF1A_bac/org"/>
</dbReference>
<dbReference type="InterPro" id="IPR004160">
    <property type="entry name" value="Transl_elong_EFTu/EF1A_C"/>
</dbReference>
<dbReference type="NCBIfam" id="TIGR00485">
    <property type="entry name" value="EF-Tu"/>
    <property type="match status" value="1"/>
</dbReference>
<dbReference type="NCBIfam" id="NF000766">
    <property type="entry name" value="PRK00049.1"/>
    <property type="match status" value="1"/>
</dbReference>
<dbReference type="NCBIfam" id="NF009372">
    <property type="entry name" value="PRK12735.1"/>
    <property type="match status" value="1"/>
</dbReference>
<dbReference type="NCBIfam" id="NF009373">
    <property type="entry name" value="PRK12736.1"/>
    <property type="match status" value="1"/>
</dbReference>
<dbReference type="NCBIfam" id="TIGR00231">
    <property type="entry name" value="small_GTP"/>
    <property type="match status" value="1"/>
</dbReference>
<dbReference type="PANTHER" id="PTHR43721:SF22">
    <property type="entry name" value="ELONGATION FACTOR TU, MITOCHONDRIAL"/>
    <property type="match status" value="1"/>
</dbReference>
<dbReference type="PANTHER" id="PTHR43721">
    <property type="entry name" value="ELONGATION FACTOR TU-RELATED"/>
    <property type="match status" value="1"/>
</dbReference>
<dbReference type="Pfam" id="PF00009">
    <property type="entry name" value="GTP_EFTU"/>
    <property type="match status" value="1"/>
</dbReference>
<dbReference type="Pfam" id="PF03144">
    <property type="entry name" value="GTP_EFTU_D2"/>
    <property type="match status" value="1"/>
</dbReference>
<dbReference type="Pfam" id="PF03143">
    <property type="entry name" value="GTP_EFTU_D3"/>
    <property type="match status" value="1"/>
</dbReference>
<dbReference type="PRINTS" id="PR00315">
    <property type="entry name" value="ELONGATNFCT"/>
</dbReference>
<dbReference type="SUPFAM" id="SSF50465">
    <property type="entry name" value="EF-Tu/eEF-1alpha/eIF2-gamma C-terminal domain"/>
    <property type="match status" value="1"/>
</dbReference>
<dbReference type="SUPFAM" id="SSF52540">
    <property type="entry name" value="P-loop containing nucleoside triphosphate hydrolases"/>
    <property type="match status" value="1"/>
</dbReference>
<dbReference type="SUPFAM" id="SSF50447">
    <property type="entry name" value="Translation proteins"/>
    <property type="match status" value="1"/>
</dbReference>
<dbReference type="PROSITE" id="PS00301">
    <property type="entry name" value="G_TR_1"/>
    <property type="match status" value="1"/>
</dbReference>
<dbReference type="PROSITE" id="PS51722">
    <property type="entry name" value="G_TR_2"/>
    <property type="match status" value="1"/>
</dbReference>
<reference key="1">
    <citation type="journal article" date="2001" name="DNA Res.">
        <title>Complete genomic sequence of the filamentous nitrogen-fixing cyanobacterium Anabaena sp. strain PCC 7120.</title>
        <authorList>
            <person name="Kaneko T."/>
            <person name="Nakamura Y."/>
            <person name="Wolk C.P."/>
            <person name="Kuritz T."/>
            <person name="Sasamoto S."/>
            <person name="Watanabe A."/>
            <person name="Iriguchi M."/>
            <person name="Ishikawa A."/>
            <person name="Kawashima K."/>
            <person name="Kimura T."/>
            <person name="Kishida Y."/>
            <person name="Kohara M."/>
            <person name="Matsumoto M."/>
            <person name="Matsuno A."/>
            <person name="Muraki A."/>
            <person name="Nakazaki N."/>
            <person name="Shimpo S."/>
            <person name="Sugimoto M."/>
            <person name="Takazawa M."/>
            <person name="Yamada M."/>
            <person name="Yasuda M."/>
            <person name="Tabata S."/>
        </authorList>
    </citation>
    <scope>NUCLEOTIDE SEQUENCE [LARGE SCALE GENOMIC DNA]</scope>
    <source>
        <strain>PCC 7120 / SAG 25.82 / UTEX 2576</strain>
    </source>
</reference>
<reference key="2">
    <citation type="submission" date="2008-12" db="UniProtKB">
        <authorList>
            <person name="Singh H."/>
            <person name="Rajaram H."/>
            <person name="Apte S.K."/>
        </authorList>
    </citation>
    <scope>PROTEIN SEQUENCE OF 156-172</scope>
    <scope>MASS SPECTROMETRY</scope>
</reference>
<evidence type="ECO:0000250" key="1"/>
<evidence type="ECO:0000255" key="2">
    <source>
        <dbReference type="HAMAP-Rule" id="MF_00118"/>
    </source>
</evidence>
<evidence type="ECO:0000269" key="3">
    <source ref="2"/>
</evidence>
<protein>
    <recommendedName>
        <fullName evidence="2">Elongation factor Tu</fullName>
        <shortName evidence="2">EF-Tu</shortName>
        <ecNumber evidence="2">3.6.5.3</ecNumber>
    </recommendedName>
</protein>
<keyword id="KW-0963">Cytoplasm</keyword>
<keyword id="KW-0903">Direct protein sequencing</keyword>
<keyword id="KW-0251">Elongation factor</keyword>
<keyword id="KW-0342">GTP-binding</keyword>
<keyword id="KW-0378">Hydrolase</keyword>
<keyword id="KW-0460">Magnesium</keyword>
<keyword id="KW-0479">Metal-binding</keyword>
<keyword id="KW-0547">Nucleotide-binding</keyword>
<keyword id="KW-0648">Protein biosynthesis</keyword>
<keyword id="KW-1185">Reference proteome</keyword>
<organism>
    <name type="scientific">Nostoc sp. (strain PCC 7120 / SAG 25.82 / UTEX 2576)</name>
    <dbReference type="NCBI Taxonomy" id="103690"/>
    <lineage>
        <taxon>Bacteria</taxon>
        <taxon>Bacillati</taxon>
        <taxon>Cyanobacteriota</taxon>
        <taxon>Cyanophyceae</taxon>
        <taxon>Nostocales</taxon>
        <taxon>Nostocaceae</taxon>
        <taxon>Nostoc</taxon>
    </lineage>
</organism>
<comment type="function">
    <text evidence="2">GTP hydrolase that promotes the GTP-dependent binding of aminoacyl-tRNA to the A-site of ribosomes during protein biosynthesis.</text>
</comment>
<comment type="catalytic activity">
    <reaction evidence="2">
        <text>GTP + H2O = GDP + phosphate + H(+)</text>
        <dbReference type="Rhea" id="RHEA:19669"/>
        <dbReference type="ChEBI" id="CHEBI:15377"/>
        <dbReference type="ChEBI" id="CHEBI:15378"/>
        <dbReference type="ChEBI" id="CHEBI:37565"/>
        <dbReference type="ChEBI" id="CHEBI:43474"/>
        <dbReference type="ChEBI" id="CHEBI:58189"/>
        <dbReference type="EC" id="3.6.5.3"/>
    </reaction>
    <physiologicalReaction direction="left-to-right" evidence="2">
        <dbReference type="Rhea" id="RHEA:19670"/>
    </physiologicalReaction>
</comment>
<comment type="subunit">
    <text evidence="2">Monomer.</text>
</comment>
<comment type="subcellular location">
    <subcellularLocation>
        <location evidence="2">Cytoplasm</location>
    </subcellularLocation>
</comment>
<comment type="mass spectrometry"/>
<comment type="similarity">
    <text evidence="2">Belongs to the TRAFAC class translation factor GTPase superfamily. Classic translation factor GTPase family. EF-Tu/EF-1A subfamily.</text>
</comment>
<name>EFTU_NOSS1</name>